<gene>
    <name evidence="1" type="primary">dnaK</name>
    <name type="ordered locus">Arth_3808</name>
</gene>
<name>DNAK_ARTS2</name>
<sequence length="622" mass="66531">MSRAVGIDLGTTNSVVSVLEGGEPTVIANAEGGRTTPSVVAFSKSGEVLVGEIAKRQAVNNIDRTIASVKRHMGTDWNVAIDDKKYTAQEISARILMKLKNDAESYLGEKVTDAVVTVPAYFNDAQRQATKEAGEIAGLNVLRIVNEPTAAALAYGLDKGKEDELILVFDLGGGTFDVSLLEVGKDEDNFSTIQVRSTAGDNHLGGDDWDQRVVNYLLNQLKVKGIDLSKDKIALQRLREAAEQAKKELSSSTSTNVSLQYLSVTPDGPVHLDEQLTRAKFQDLTKDLLDRTKKPFQDVIKEAGIKLSEIDHIVLVGGSTRMPAVYELVKELAGGKEPNKGVNPDEVVAVGAALQAGVLKGERKDVLLIDVTPLSLGIETKGGVMTHLIERNTAIPTKRSETFTTADDNQPSVAIQVFQGEREFTRDNKPLGTFELTGIAPAPRGVPQVEVTFDIDANGIVHVSAKDKGTGKEQSMTITGGTALSKEDIDRMVKDAEEHAAEDKARREATDTRNTAEQLAYSVDKLIADNADKLPEEVKTEVKADVDALKKALEGTDDAAVKTAFEKLQASQSKLGEAIYAQAGSPDGATGPAGAESAAGSEGAKADEDIVDAEIVDEDEKK</sequence>
<evidence type="ECO:0000255" key="1">
    <source>
        <dbReference type="HAMAP-Rule" id="MF_00332"/>
    </source>
</evidence>
<evidence type="ECO:0000256" key="2">
    <source>
        <dbReference type="SAM" id="MobiDB-lite"/>
    </source>
</evidence>
<reference key="1">
    <citation type="journal article" date="2013" name="Stand. Genomic Sci.">
        <title>Complete genome sequence of Arthrobacter sp. strain FB24.</title>
        <authorList>
            <person name="Nakatsu C.H."/>
            <person name="Barabote R."/>
            <person name="Thompson S."/>
            <person name="Bruce D."/>
            <person name="Detter C."/>
            <person name="Brettin T."/>
            <person name="Han C."/>
            <person name="Beasley F."/>
            <person name="Chen W."/>
            <person name="Konopka A."/>
            <person name="Xie G."/>
        </authorList>
    </citation>
    <scope>NUCLEOTIDE SEQUENCE [LARGE SCALE GENOMIC DNA]</scope>
    <source>
        <strain>FB24</strain>
    </source>
</reference>
<comment type="function">
    <text evidence="1">Acts as a chaperone.</text>
</comment>
<comment type="induction">
    <text evidence="1">By stress conditions e.g. heat shock.</text>
</comment>
<comment type="similarity">
    <text evidence="1">Belongs to the heat shock protein 70 family.</text>
</comment>
<accession>A0K1L3</accession>
<proteinExistence type="inferred from homology"/>
<protein>
    <recommendedName>
        <fullName evidence="1">Chaperone protein DnaK</fullName>
    </recommendedName>
    <alternativeName>
        <fullName evidence="1">HSP70</fullName>
    </alternativeName>
    <alternativeName>
        <fullName evidence="1">Heat shock 70 kDa protein</fullName>
    </alternativeName>
    <alternativeName>
        <fullName evidence="1">Heat shock protein 70</fullName>
    </alternativeName>
</protein>
<feature type="chain" id="PRO_1000059506" description="Chaperone protein DnaK">
    <location>
        <begin position="1"/>
        <end position="622"/>
    </location>
</feature>
<feature type="region of interest" description="Disordered" evidence="2">
    <location>
        <begin position="496"/>
        <end position="515"/>
    </location>
</feature>
<feature type="region of interest" description="Disordered" evidence="2">
    <location>
        <begin position="579"/>
        <end position="622"/>
    </location>
</feature>
<feature type="compositionally biased region" description="Basic and acidic residues" evidence="2">
    <location>
        <begin position="496"/>
        <end position="511"/>
    </location>
</feature>
<feature type="compositionally biased region" description="Low complexity" evidence="2">
    <location>
        <begin position="588"/>
        <end position="603"/>
    </location>
</feature>
<feature type="compositionally biased region" description="Acidic residues" evidence="2">
    <location>
        <begin position="609"/>
        <end position="622"/>
    </location>
</feature>
<feature type="modified residue" description="Phosphothreonine; by autocatalysis" evidence="1">
    <location>
        <position position="175"/>
    </location>
</feature>
<organism>
    <name type="scientific">Arthrobacter sp. (strain FB24)</name>
    <dbReference type="NCBI Taxonomy" id="290399"/>
    <lineage>
        <taxon>Bacteria</taxon>
        <taxon>Bacillati</taxon>
        <taxon>Actinomycetota</taxon>
        <taxon>Actinomycetes</taxon>
        <taxon>Micrococcales</taxon>
        <taxon>Micrococcaceae</taxon>
        <taxon>Arthrobacter</taxon>
    </lineage>
</organism>
<dbReference type="EMBL" id="CP000454">
    <property type="protein sequence ID" value="ABK05183.1"/>
    <property type="molecule type" value="Genomic_DNA"/>
</dbReference>
<dbReference type="RefSeq" id="WP_011693633.1">
    <property type="nucleotide sequence ID" value="NC_008541.1"/>
</dbReference>
<dbReference type="SMR" id="A0K1L3"/>
<dbReference type="STRING" id="290399.Arth_3808"/>
<dbReference type="KEGG" id="art:Arth_3808"/>
<dbReference type="eggNOG" id="COG0443">
    <property type="taxonomic scope" value="Bacteria"/>
</dbReference>
<dbReference type="HOGENOM" id="CLU_005965_2_4_11"/>
<dbReference type="OrthoDB" id="9766019at2"/>
<dbReference type="Proteomes" id="UP000000754">
    <property type="component" value="Chromosome"/>
</dbReference>
<dbReference type="GO" id="GO:0005524">
    <property type="term" value="F:ATP binding"/>
    <property type="evidence" value="ECO:0007669"/>
    <property type="project" value="UniProtKB-UniRule"/>
</dbReference>
<dbReference type="GO" id="GO:0140662">
    <property type="term" value="F:ATP-dependent protein folding chaperone"/>
    <property type="evidence" value="ECO:0007669"/>
    <property type="project" value="InterPro"/>
</dbReference>
<dbReference type="GO" id="GO:0051082">
    <property type="term" value="F:unfolded protein binding"/>
    <property type="evidence" value="ECO:0007669"/>
    <property type="project" value="InterPro"/>
</dbReference>
<dbReference type="CDD" id="cd10234">
    <property type="entry name" value="ASKHA_NBD_HSP70_DnaK-like"/>
    <property type="match status" value="1"/>
</dbReference>
<dbReference type="FunFam" id="2.60.34.10:FF:000014">
    <property type="entry name" value="Chaperone protein DnaK HSP70"/>
    <property type="match status" value="1"/>
</dbReference>
<dbReference type="FunFam" id="1.20.1270.10:FF:000001">
    <property type="entry name" value="Molecular chaperone DnaK"/>
    <property type="match status" value="1"/>
</dbReference>
<dbReference type="FunFam" id="3.30.420.40:FF:000071">
    <property type="entry name" value="Molecular chaperone DnaK"/>
    <property type="match status" value="1"/>
</dbReference>
<dbReference type="FunFam" id="3.90.640.10:FF:000003">
    <property type="entry name" value="Molecular chaperone DnaK"/>
    <property type="match status" value="1"/>
</dbReference>
<dbReference type="Gene3D" id="1.20.1270.10">
    <property type="match status" value="1"/>
</dbReference>
<dbReference type="Gene3D" id="3.30.420.40">
    <property type="match status" value="2"/>
</dbReference>
<dbReference type="Gene3D" id="3.90.640.10">
    <property type="entry name" value="Actin, Chain A, domain 4"/>
    <property type="match status" value="1"/>
</dbReference>
<dbReference type="Gene3D" id="2.60.34.10">
    <property type="entry name" value="Substrate Binding Domain Of DNAk, Chain A, domain 1"/>
    <property type="match status" value="1"/>
</dbReference>
<dbReference type="HAMAP" id="MF_00332">
    <property type="entry name" value="DnaK"/>
    <property type="match status" value="1"/>
</dbReference>
<dbReference type="InterPro" id="IPR043129">
    <property type="entry name" value="ATPase_NBD"/>
</dbReference>
<dbReference type="InterPro" id="IPR012725">
    <property type="entry name" value="Chaperone_DnaK"/>
</dbReference>
<dbReference type="InterPro" id="IPR018181">
    <property type="entry name" value="Heat_shock_70_CS"/>
</dbReference>
<dbReference type="InterPro" id="IPR029048">
    <property type="entry name" value="HSP70_C_sf"/>
</dbReference>
<dbReference type="InterPro" id="IPR029047">
    <property type="entry name" value="HSP70_peptide-bd_sf"/>
</dbReference>
<dbReference type="InterPro" id="IPR013126">
    <property type="entry name" value="Hsp_70_fam"/>
</dbReference>
<dbReference type="NCBIfam" id="NF001413">
    <property type="entry name" value="PRK00290.1"/>
    <property type="match status" value="1"/>
</dbReference>
<dbReference type="NCBIfam" id="TIGR02350">
    <property type="entry name" value="prok_dnaK"/>
    <property type="match status" value="1"/>
</dbReference>
<dbReference type="PANTHER" id="PTHR19375">
    <property type="entry name" value="HEAT SHOCK PROTEIN 70KDA"/>
    <property type="match status" value="1"/>
</dbReference>
<dbReference type="Pfam" id="PF00012">
    <property type="entry name" value="HSP70"/>
    <property type="match status" value="2"/>
</dbReference>
<dbReference type="PRINTS" id="PR00301">
    <property type="entry name" value="HEATSHOCK70"/>
</dbReference>
<dbReference type="SUPFAM" id="SSF53067">
    <property type="entry name" value="Actin-like ATPase domain"/>
    <property type="match status" value="2"/>
</dbReference>
<dbReference type="SUPFAM" id="SSF100920">
    <property type="entry name" value="Heat shock protein 70kD (HSP70), peptide-binding domain"/>
    <property type="match status" value="1"/>
</dbReference>
<dbReference type="PROSITE" id="PS00297">
    <property type="entry name" value="HSP70_1"/>
    <property type="match status" value="1"/>
</dbReference>
<dbReference type="PROSITE" id="PS00329">
    <property type="entry name" value="HSP70_2"/>
    <property type="match status" value="1"/>
</dbReference>
<dbReference type="PROSITE" id="PS01036">
    <property type="entry name" value="HSP70_3"/>
    <property type="match status" value="1"/>
</dbReference>
<keyword id="KW-0067">ATP-binding</keyword>
<keyword id="KW-0143">Chaperone</keyword>
<keyword id="KW-0547">Nucleotide-binding</keyword>
<keyword id="KW-0597">Phosphoprotein</keyword>
<keyword id="KW-1185">Reference proteome</keyword>
<keyword id="KW-0346">Stress response</keyword>